<organism>
    <name type="scientific">Schistosoma japonicum</name>
    <name type="common">Blood fluke</name>
    <dbReference type="NCBI Taxonomy" id="6182"/>
    <lineage>
        <taxon>Eukaryota</taxon>
        <taxon>Metazoa</taxon>
        <taxon>Spiralia</taxon>
        <taxon>Lophotrochozoa</taxon>
        <taxon>Platyhelminthes</taxon>
        <taxon>Trematoda</taxon>
        <taxon>Digenea</taxon>
        <taxon>Strigeidida</taxon>
        <taxon>Schistosomatoidea</taxon>
        <taxon>Schistosomatidae</taxon>
        <taxon>Schistosoma</taxon>
    </lineage>
</organism>
<accession>Q5DGJ1</accession>
<gene>
    <name type="ORF">SJCHGC00887</name>
</gene>
<protein>
    <recommendedName>
        <fullName evidence="1">Kynureninase</fullName>
        <ecNumber evidence="1">3.7.1.3</ecNumber>
    </recommendedName>
    <alternativeName>
        <fullName evidence="1">L-kynurenine hydrolase</fullName>
    </alternativeName>
</protein>
<proteinExistence type="evidence at transcript level"/>
<name>KYNU_SCHJA</name>
<feature type="chain" id="PRO_0000356960" description="Kynureninase">
    <location>
        <begin position="1"/>
        <end position="436"/>
    </location>
</feature>
<feature type="binding site" evidence="1">
    <location>
        <position position="88"/>
    </location>
    <ligand>
        <name>pyridoxal 5'-phosphate</name>
        <dbReference type="ChEBI" id="CHEBI:597326"/>
    </ligand>
</feature>
<feature type="binding site" evidence="1">
    <location>
        <position position="89"/>
    </location>
    <ligand>
        <name>pyridoxal 5'-phosphate</name>
        <dbReference type="ChEBI" id="CHEBI:597326"/>
    </ligand>
</feature>
<feature type="binding site" evidence="1">
    <location>
        <begin position="116"/>
        <end position="119"/>
    </location>
    <ligand>
        <name>pyridoxal 5'-phosphate</name>
        <dbReference type="ChEBI" id="CHEBI:597326"/>
    </ligand>
</feature>
<feature type="binding site" evidence="1">
    <location>
        <position position="202"/>
    </location>
    <ligand>
        <name>pyridoxal 5'-phosphate</name>
        <dbReference type="ChEBI" id="CHEBI:597326"/>
    </ligand>
</feature>
<feature type="binding site" evidence="1">
    <location>
        <position position="205"/>
    </location>
    <ligand>
        <name>pyridoxal 5'-phosphate</name>
        <dbReference type="ChEBI" id="CHEBI:597326"/>
    </ligand>
</feature>
<feature type="binding site" evidence="1">
    <location>
        <position position="227"/>
    </location>
    <ligand>
        <name>pyridoxal 5'-phosphate</name>
        <dbReference type="ChEBI" id="CHEBI:597326"/>
    </ligand>
</feature>
<feature type="binding site" evidence="1">
    <location>
        <position position="280"/>
    </location>
    <ligand>
        <name>pyridoxal 5'-phosphate</name>
        <dbReference type="ChEBI" id="CHEBI:597326"/>
    </ligand>
</feature>
<feature type="binding site" evidence="1">
    <location>
        <position position="308"/>
    </location>
    <ligand>
        <name>pyridoxal 5'-phosphate</name>
        <dbReference type="ChEBI" id="CHEBI:597326"/>
    </ligand>
</feature>
<feature type="modified residue" description="N6-(pyridoxal phosphate)lysine" evidence="1">
    <location>
        <position position="228"/>
    </location>
</feature>
<dbReference type="EC" id="3.7.1.3" evidence="1"/>
<dbReference type="EMBL" id="AY813333">
    <property type="protein sequence ID" value="AAW25065.1"/>
    <property type="molecule type" value="mRNA"/>
</dbReference>
<dbReference type="SMR" id="Q5DGJ1"/>
<dbReference type="UniPathway" id="UPA00253">
    <property type="reaction ID" value="UER00329"/>
</dbReference>
<dbReference type="UniPathway" id="UPA00334">
    <property type="reaction ID" value="UER00455"/>
</dbReference>
<dbReference type="GO" id="GO:0005737">
    <property type="term" value="C:cytoplasm"/>
    <property type="evidence" value="ECO:0007669"/>
    <property type="project" value="UniProtKB-SubCell"/>
</dbReference>
<dbReference type="GO" id="GO:0030429">
    <property type="term" value="F:kynureninase activity"/>
    <property type="evidence" value="ECO:0007669"/>
    <property type="project" value="UniProtKB-UniRule"/>
</dbReference>
<dbReference type="GO" id="GO:0030170">
    <property type="term" value="F:pyridoxal phosphate binding"/>
    <property type="evidence" value="ECO:0007669"/>
    <property type="project" value="UniProtKB-UniRule"/>
</dbReference>
<dbReference type="GO" id="GO:0034354">
    <property type="term" value="P:'de novo' NAD biosynthetic process from L-tryptophan"/>
    <property type="evidence" value="ECO:0007669"/>
    <property type="project" value="UniProtKB-UniRule"/>
</dbReference>
<dbReference type="GO" id="GO:0043420">
    <property type="term" value="P:anthranilate metabolic process"/>
    <property type="evidence" value="ECO:0007669"/>
    <property type="project" value="UniProtKB-UniRule"/>
</dbReference>
<dbReference type="GO" id="GO:0097053">
    <property type="term" value="P:L-kynurenine catabolic process"/>
    <property type="evidence" value="ECO:0007669"/>
    <property type="project" value="UniProtKB-UniRule"/>
</dbReference>
<dbReference type="GO" id="GO:0019441">
    <property type="term" value="P:L-tryptophan catabolic process to kynurenine"/>
    <property type="evidence" value="ECO:0007669"/>
    <property type="project" value="TreeGrafter"/>
</dbReference>
<dbReference type="GO" id="GO:0019805">
    <property type="term" value="P:quinolinate biosynthetic process"/>
    <property type="evidence" value="ECO:0007669"/>
    <property type="project" value="UniProtKB-UniRule"/>
</dbReference>
<dbReference type="Gene3D" id="3.90.1150.10">
    <property type="entry name" value="Aspartate Aminotransferase, domain 1"/>
    <property type="match status" value="1"/>
</dbReference>
<dbReference type="Gene3D" id="3.40.640.10">
    <property type="entry name" value="Type I PLP-dependent aspartate aminotransferase-like (Major domain)"/>
    <property type="match status" value="1"/>
</dbReference>
<dbReference type="HAMAP" id="MF_01970">
    <property type="entry name" value="Kynureninase"/>
    <property type="match status" value="1"/>
</dbReference>
<dbReference type="InterPro" id="IPR000192">
    <property type="entry name" value="Aminotrans_V_dom"/>
</dbReference>
<dbReference type="InterPro" id="IPR010111">
    <property type="entry name" value="Kynureninase"/>
</dbReference>
<dbReference type="InterPro" id="IPR015424">
    <property type="entry name" value="PyrdxlP-dep_Trfase"/>
</dbReference>
<dbReference type="InterPro" id="IPR015421">
    <property type="entry name" value="PyrdxlP-dep_Trfase_major"/>
</dbReference>
<dbReference type="InterPro" id="IPR015422">
    <property type="entry name" value="PyrdxlP-dep_Trfase_small"/>
</dbReference>
<dbReference type="NCBIfam" id="TIGR01814">
    <property type="entry name" value="kynureninase"/>
    <property type="match status" value="1"/>
</dbReference>
<dbReference type="PANTHER" id="PTHR14084">
    <property type="entry name" value="KYNURENINASE"/>
    <property type="match status" value="1"/>
</dbReference>
<dbReference type="PANTHER" id="PTHR14084:SF0">
    <property type="entry name" value="KYNURENINASE"/>
    <property type="match status" value="1"/>
</dbReference>
<dbReference type="Pfam" id="PF00266">
    <property type="entry name" value="Aminotran_5"/>
    <property type="match status" value="1"/>
</dbReference>
<dbReference type="Pfam" id="PF22580">
    <property type="entry name" value="KYNU_C"/>
    <property type="match status" value="1"/>
</dbReference>
<dbReference type="PIRSF" id="PIRSF038800">
    <property type="entry name" value="KYNU"/>
    <property type="match status" value="1"/>
</dbReference>
<dbReference type="SUPFAM" id="SSF53383">
    <property type="entry name" value="PLP-dependent transferases"/>
    <property type="match status" value="1"/>
</dbReference>
<comment type="function">
    <text evidence="1">Catalyzes the cleavage of L-kynurenine (L-Kyn) and L-3-hydroxykynurenine (L-3OHKyn) into anthranilic acid (AA) and 3-hydroxyanthranilic acid (3-OHAA), respectively.</text>
</comment>
<comment type="catalytic activity">
    <reaction evidence="1">
        <text>L-kynurenine + H2O = anthranilate + L-alanine + H(+)</text>
        <dbReference type="Rhea" id="RHEA:16813"/>
        <dbReference type="ChEBI" id="CHEBI:15377"/>
        <dbReference type="ChEBI" id="CHEBI:15378"/>
        <dbReference type="ChEBI" id="CHEBI:16567"/>
        <dbReference type="ChEBI" id="CHEBI:57959"/>
        <dbReference type="ChEBI" id="CHEBI:57972"/>
        <dbReference type="EC" id="3.7.1.3"/>
    </reaction>
</comment>
<comment type="catalytic activity">
    <reaction evidence="1">
        <text>3-hydroxy-L-kynurenine + H2O = 3-hydroxyanthranilate + L-alanine + H(+)</text>
        <dbReference type="Rhea" id="RHEA:25143"/>
        <dbReference type="ChEBI" id="CHEBI:15377"/>
        <dbReference type="ChEBI" id="CHEBI:15378"/>
        <dbReference type="ChEBI" id="CHEBI:36559"/>
        <dbReference type="ChEBI" id="CHEBI:57972"/>
        <dbReference type="ChEBI" id="CHEBI:58125"/>
        <dbReference type="EC" id="3.7.1.3"/>
    </reaction>
</comment>
<comment type="cofactor">
    <cofactor evidence="1">
        <name>pyridoxal 5'-phosphate</name>
        <dbReference type="ChEBI" id="CHEBI:597326"/>
    </cofactor>
</comment>
<comment type="pathway">
    <text evidence="1">Amino-acid degradation; L-kynurenine degradation; L-alanine and anthranilate from L-kynurenine: step 1/1.</text>
</comment>
<comment type="pathway">
    <text evidence="1">Cofactor biosynthesis; NAD(+) biosynthesis; quinolinate from L-kynurenine: step 2/3.</text>
</comment>
<comment type="subunit">
    <text evidence="1">Homodimer.</text>
</comment>
<comment type="subcellular location">
    <subcellularLocation>
        <location evidence="1">Cytoplasm</location>
    </subcellularLocation>
</comment>
<comment type="similarity">
    <text evidence="1">Belongs to the kynureninase family.</text>
</comment>
<evidence type="ECO:0000255" key="1">
    <source>
        <dbReference type="HAMAP-Rule" id="MF_03017"/>
    </source>
</evidence>
<keyword id="KW-0963">Cytoplasm</keyword>
<keyword id="KW-0378">Hydrolase</keyword>
<keyword id="KW-0662">Pyridine nucleotide biosynthesis</keyword>
<keyword id="KW-0663">Pyridoxal phosphate</keyword>
<reference key="1">
    <citation type="journal article" date="2006" name="PLoS Pathog.">
        <title>New perspectives on host-parasite interplay by comparative transcriptomic and proteomic analyses of Schistosoma japonicum.</title>
        <authorList>
            <person name="Liu F."/>
            <person name="Lu J."/>
            <person name="Hu W."/>
            <person name="Wang S.-Y."/>
            <person name="Cui S.-J."/>
            <person name="Chi M."/>
            <person name="Yan Q."/>
            <person name="Wang X.-R."/>
            <person name="Song H.-D."/>
            <person name="Xu X.-N."/>
            <person name="Wang J.-J."/>
            <person name="Zhang X.-L."/>
            <person name="Zhang X."/>
            <person name="Wang Z.-Q."/>
            <person name="Xue C.-L."/>
            <person name="Brindley P.J."/>
            <person name="McManus D.P."/>
            <person name="Yang P.-Y."/>
            <person name="Feng Z."/>
            <person name="Chen Z."/>
            <person name="Han Z.-G."/>
        </authorList>
    </citation>
    <scope>NUCLEOTIDE SEQUENCE [LARGE SCALE MRNA]</scope>
</reference>
<sequence length="436" mass="50248">MKILQYKSIENVQYSKNILYFCGHSMGLQPKSTKIYINKILNQWKNLGVLSYHYGELPASYCDEQLSIDCAQWIVNAKFNEVSITCNLTVNMHVLIAKFYRPTNEKYCILIENDIFPSDYYVLESHIQWHGYNTNDCFIKLKPRLHEYCLRNDDILPEIIKNQHRIALIWLPGIQYITGQLFNMKLITEWGHQYAKCPVGWDLAHAVGNIPLYLHDWNIDMAVWCSYKYLNGSPGAIGGLFIHEKHHHEEGSYGPKFIEFTNNNNITIFNNINGPQLTGWWSHRSETRFNMTGNMELAKGANAYRLSNPPLLLAAALTVSVNIIKSCGGMINLREKSIKLTDYLEYLITNSSLALKHDHYCLVTPSNSNERGAQLTISVTHMNIQVVYENLLKLGVICDYRLPNFLRITPIPLYNSFEDVYLLAKCLHQVLNDTLN</sequence>